<accession>Q7MB64</accession>
<evidence type="ECO:0000255" key="1">
    <source>
        <dbReference type="HAMAP-Rule" id="MF_00605"/>
    </source>
</evidence>
<organism>
    <name type="scientific">Photorhabdus laumondii subsp. laumondii (strain DSM 15139 / CIP 105565 / TT01)</name>
    <name type="common">Photorhabdus luminescens subsp. laumondii</name>
    <dbReference type="NCBI Taxonomy" id="243265"/>
    <lineage>
        <taxon>Bacteria</taxon>
        <taxon>Pseudomonadati</taxon>
        <taxon>Pseudomonadota</taxon>
        <taxon>Gammaproteobacteria</taxon>
        <taxon>Enterobacterales</taxon>
        <taxon>Morganellaceae</taxon>
        <taxon>Photorhabdus</taxon>
    </lineage>
</organism>
<gene>
    <name evidence="1" type="primary">trmD</name>
    <name type="ordered locus">plu1259</name>
</gene>
<feature type="chain" id="PRO_0000060430" description="tRNA (guanine-N(1)-)-methyltransferase">
    <location>
        <begin position="1"/>
        <end position="250"/>
    </location>
</feature>
<feature type="binding site" evidence="1">
    <location>
        <position position="113"/>
    </location>
    <ligand>
        <name>S-adenosyl-L-methionine</name>
        <dbReference type="ChEBI" id="CHEBI:59789"/>
    </ligand>
</feature>
<feature type="binding site" evidence="1">
    <location>
        <begin position="133"/>
        <end position="138"/>
    </location>
    <ligand>
        <name>S-adenosyl-L-methionine</name>
        <dbReference type="ChEBI" id="CHEBI:59789"/>
    </ligand>
</feature>
<proteinExistence type="inferred from homology"/>
<comment type="function">
    <text evidence="1">Specifically methylates guanosine-37 in various tRNAs.</text>
</comment>
<comment type="catalytic activity">
    <reaction evidence="1">
        <text>guanosine(37) in tRNA + S-adenosyl-L-methionine = N(1)-methylguanosine(37) in tRNA + S-adenosyl-L-homocysteine + H(+)</text>
        <dbReference type="Rhea" id="RHEA:36899"/>
        <dbReference type="Rhea" id="RHEA-COMP:10145"/>
        <dbReference type="Rhea" id="RHEA-COMP:10147"/>
        <dbReference type="ChEBI" id="CHEBI:15378"/>
        <dbReference type="ChEBI" id="CHEBI:57856"/>
        <dbReference type="ChEBI" id="CHEBI:59789"/>
        <dbReference type="ChEBI" id="CHEBI:73542"/>
        <dbReference type="ChEBI" id="CHEBI:74269"/>
        <dbReference type="EC" id="2.1.1.228"/>
    </reaction>
</comment>
<comment type="subunit">
    <text evidence="1">Homodimer.</text>
</comment>
<comment type="subcellular location">
    <subcellularLocation>
        <location evidence="1">Cytoplasm</location>
    </subcellularLocation>
</comment>
<comment type="similarity">
    <text evidence="1">Belongs to the RNA methyltransferase TrmD family.</text>
</comment>
<reference key="1">
    <citation type="journal article" date="2003" name="Nat. Biotechnol.">
        <title>The genome sequence of the entomopathogenic bacterium Photorhabdus luminescens.</title>
        <authorList>
            <person name="Duchaud E."/>
            <person name="Rusniok C."/>
            <person name="Frangeul L."/>
            <person name="Buchrieser C."/>
            <person name="Givaudan A."/>
            <person name="Taourit S."/>
            <person name="Bocs S."/>
            <person name="Boursaux-Eude C."/>
            <person name="Chandler M."/>
            <person name="Charles J.-F."/>
            <person name="Dassa E."/>
            <person name="Derose R."/>
            <person name="Derzelle S."/>
            <person name="Freyssinet G."/>
            <person name="Gaudriault S."/>
            <person name="Medigue C."/>
            <person name="Lanois A."/>
            <person name="Powell K."/>
            <person name="Siguier P."/>
            <person name="Vincent R."/>
            <person name="Wingate V."/>
            <person name="Zouine M."/>
            <person name="Glaser P."/>
            <person name="Boemare N."/>
            <person name="Danchin A."/>
            <person name="Kunst F."/>
        </authorList>
    </citation>
    <scope>NUCLEOTIDE SEQUENCE [LARGE SCALE GENOMIC DNA]</scope>
    <source>
        <strain>DSM 15139 / CIP 105565 / TT01</strain>
    </source>
</reference>
<name>TRMD_PHOLL</name>
<sequence length="250" mass="28113">MWIGVISLFPEMFRAITDYGVTGRAVKNGLLSIECWNPRDFTYDRHRTVDDRPYGGGPGMLMMVQPLREAIHAAKTAAGEGAKVIYLSPQGRKLNQQGVCELATNEKLILICGRYEGIDERVIQTEIDEEWSIGDYVLSGGEIPAMTMIDSVSRFIPGVLGHQASAEEDSFADGLLDCPHYTRPEVLDGMEVPPVLLSGNHAEINRWRMKQSLGRTWLRRPELLENLALTDEQRILLTEFQREHLTEATN</sequence>
<protein>
    <recommendedName>
        <fullName evidence="1">tRNA (guanine-N(1)-)-methyltransferase</fullName>
        <ecNumber evidence="1">2.1.1.228</ecNumber>
    </recommendedName>
    <alternativeName>
        <fullName evidence="1">M1G-methyltransferase</fullName>
    </alternativeName>
    <alternativeName>
        <fullName evidence="1">tRNA [GM37] methyltransferase</fullName>
    </alternativeName>
</protein>
<keyword id="KW-0963">Cytoplasm</keyword>
<keyword id="KW-0489">Methyltransferase</keyword>
<keyword id="KW-1185">Reference proteome</keyword>
<keyword id="KW-0949">S-adenosyl-L-methionine</keyword>
<keyword id="KW-0808">Transferase</keyword>
<keyword id="KW-0819">tRNA processing</keyword>
<dbReference type="EC" id="2.1.1.228" evidence="1"/>
<dbReference type="EMBL" id="BX571863">
    <property type="protein sequence ID" value="CAE13553.1"/>
    <property type="molecule type" value="Genomic_DNA"/>
</dbReference>
<dbReference type="RefSeq" id="WP_011145583.1">
    <property type="nucleotide sequence ID" value="NC_005126.1"/>
</dbReference>
<dbReference type="SMR" id="Q7MB64"/>
<dbReference type="STRING" id="243265.plu1259"/>
<dbReference type="GeneID" id="48847533"/>
<dbReference type="KEGG" id="plu:plu1259"/>
<dbReference type="eggNOG" id="COG0336">
    <property type="taxonomic scope" value="Bacteria"/>
</dbReference>
<dbReference type="HOGENOM" id="CLU_047363_0_1_6"/>
<dbReference type="OrthoDB" id="9807416at2"/>
<dbReference type="Proteomes" id="UP000002514">
    <property type="component" value="Chromosome"/>
</dbReference>
<dbReference type="GO" id="GO:0005829">
    <property type="term" value="C:cytosol"/>
    <property type="evidence" value="ECO:0007669"/>
    <property type="project" value="TreeGrafter"/>
</dbReference>
<dbReference type="GO" id="GO:0052906">
    <property type="term" value="F:tRNA (guanine(37)-N1)-methyltransferase activity"/>
    <property type="evidence" value="ECO:0007669"/>
    <property type="project" value="UniProtKB-UniRule"/>
</dbReference>
<dbReference type="GO" id="GO:0002939">
    <property type="term" value="P:tRNA N1-guanine methylation"/>
    <property type="evidence" value="ECO:0007669"/>
    <property type="project" value="TreeGrafter"/>
</dbReference>
<dbReference type="CDD" id="cd18080">
    <property type="entry name" value="TrmD-like"/>
    <property type="match status" value="1"/>
</dbReference>
<dbReference type="FunFam" id="1.10.1270.20:FF:000001">
    <property type="entry name" value="tRNA (guanine-N(1)-)-methyltransferase"/>
    <property type="match status" value="1"/>
</dbReference>
<dbReference type="FunFam" id="3.40.1280.10:FF:000001">
    <property type="entry name" value="tRNA (guanine-N(1)-)-methyltransferase"/>
    <property type="match status" value="1"/>
</dbReference>
<dbReference type="Gene3D" id="3.40.1280.10">
    <property type="match status" value="1"/>
</dbReference>
<dbReference type="Gene3D" id="1.10.1270.20">
    <property type="entry name" value="tRNA(m1g37)methyltransferase, domain 2"/>
    <property type="match status" value="1"/>
</dbReference>
<dbReference type="HAMAP" id="MF_00605">
    <property type="entry name" value="TrmD"/>
    <property type="match status" value="1"/>
</dbReference>
<dbReference type="InterPro" id="IPR029028">
    <property type="entry name" value="Alpha/beta_knot_MTases"/>
</dbReference>
<dbReference type="InterPro" id="IPR023148">
    <property type="entry name" value="tRNA_m1G_MeTrfase_C_sf"/>
</dbReference>
<dbReference type="InterPro" id="IPR002649">
    <property type="entry name" value="tRNA_m1G_MeTrfase_TrmD"/>
</dbReference>
<dbReference type="InterPro" id="IPR029026">
    <property type="entry name" value="tRNA_m1G_MTases_N"/>
</dbReference>
<dbReference type="InterPro" id="IPR016009">
    <property type="entry name" value="tRNA_MeTrfase_TRMD/TRM10"/>
</dbReference>
<dbReference type="NCBIfam" id="NF000648">
    <property type="entry name" value="PRK00026.1"/>
    <property type="match status" value="1"/>
</dbReference>
<dbReference type="NCBIfam" id="TIGR00088">
    <property type="entry name" value="trmD"/>
    <property type="match status" value="1"/>
</dbReference>
<dbReference type="PANTHER" id="PTHR46417">
    <property type="entry name" value="TRNA (GUANINE-N(1)-)-METHYLTRANSFERASE"/>
    <property type="match status" value="1"/>
</dbReference>
<dbReference type="PANTHER" id="PTHR46417:SF1">
    <property type="entry name" value="TRNA (GUANINE-N(1)-)-METHYLTRANSFERASE"/>
    <property type="match status" value="1"/>
</dbReference>
<dbReference type="Pfam" id="PF01746">
    <property type="entry name" value="tRNA_m1G_MT"/>
    <property type="match status" value="1"/>
</dbReference>
<dbReference type="PIRSF" id="PIRSF000386">
    <property type="entry name" value="tRNA_mtase"/>
    <property type="match status" value="1"/>
</dbReference>
<dbReference type="SUPFAM" id="SSF75217">
    <property type="entry name" value="alpha/beta knot"/>
    <property type="match status" value="1"/>
</dbReference>